<feature type="chain" id="PRO_1000015978" description="Aspartyl/glutamyl-tRNA(Asn/Gln) amidotransferase subunit B">
    <location>
        <begin position="1"/>
        <end position="476"/>
    </location>
</feature>
<dbReference type="EC" id="6.3.5.-" evidence="1"/>
<dbReference type="EMBL" id="CR954253">
    <property type="protein sequence ID" value="CAI97301.1"/>
    <property type="molecule type" value="Genomic_DNA"/>
</dbReference>
<dbReference type="RefSeq" id="WP_003620942.1">
    <property type="nucleotide sequence ID" value="NZ_JQAV01000001.1"/>
</dbReference>
<dbReference type="SMR" id="Q1GBF3"/>
<dbReference type="STRING" id="390333.Ldb0470"/>
<dbReference type="KEGG" id="ldb:Ldb0470"/>
<dbReference type="PATRIC" id="fig|390333.13.peg.325"/>
<dbReference type="eggNOG" id="COG0064">
    <property type="taxonomic scope" value="Bacteria"/>
</dbReference>
<dbReference type="HOGENOM" id="CLU_019240_0_0_9"/>
<dbReference type="BioCyc" id="LDEL390333:LDB_RS02005-MONOMER"/>
<dbReference type="Proteomes" id="UP000001259">
    <property type="component" value="Chromosome"/>
</dbReference>
<dbReference type="GO" id="GO:0050566">
    <property type="term" value="F:asparaginyl-tRNA synthase (glutamine-hydrolyzing) activity"/>
    <property type="evidence" value="ECO:0007669"/>
    <property type="project" value="RHEA"/>
</dbReference>
<dbReference type="GO" id="GO:0005524">
    <property type="term" value="F:ATP binding"/>
    <property type="evidence" value="ECO:0007669"/>
    <property type="project" value="UniProtKB-KW"/>
</dbReference>
<dbReference type="GO" id="GO:0050567">
    <property type="term" value="F:glutaminyl-tRNA synthase (glutamine-hydrolyzing) activity"/>
    <property type="evidence" value="ECO:0007669"/>
    <property type="project" value="UniProtKB-UniRule"/>
</dbReference>
<dbReference type="GO" id="GO:0070681">
    <property type="term" value="P:glutaminyl-tRNAGln biosynthesis via transamidation"/>
    <property type="evidence" value="ECO:0007669"/>
    <property type="project" value="TreeGrafter"/>
</dbReference>
<dbReference type="GO" id="GO:0006412">
    <property type="term" value="P:translation"/>
    <property type="evidence" value="ECO:0007669"/>
    <property type="project" value="UniProtKB-UniRule"/>
</dbReference>
<dbReference type="FunFam" id="1.10.10.410:FF:000001">
    <property type="entry name" value="Aspartyl/glutamyl-tRNA(Asn/Gln) amidotransferase subunit B"/>
    <property type="match status" value="1"/>
</dbReference>
<dbReference type="Gene3D" id="1.10.10.410">
    <property type="match status" value="1"/>
</dbReference>
<dbReference type="Gene3D" id="1.10.150.380">
    <property type="entry name" value="GatB domain, N-terminal subdomain"/>
    <property type="match status" value="1"/>
</dbReference>
<dbReference type="HAMAP" id="MF_00121">
    <property type="entry name" value="GatB"/>
    <property type="match status" value="1"/>
</dbReference>
<dbReference type="InterPro" id="IPR017959">
    <property type="entry name" value="Asn/Gln-tRNA_amidoTrfase_suB/E"/>
</dbReference>
<dbReference type="InterPro" id="IPR006075">
    <property type="entry name" value="Asn/Gln-tRNA_Trfase_suB/E_cat"/>
</dbReference>
<dbReference type="InterPro" id="IPR018027">
    <property type="entry name" value="Asn/Gln_amidotransferase"/>
</dbReference>
<dbReference type="InterPro" id="IPR003789">
    <property type="entry name" value="Asn/Gln_tRNA_amidoTrase-B-like"/>
</dbReference>
<dbReference type="InterPro" id="IPR004413">
    <property type="entry name" value="GatB"/>
</dbReference>
<dbReference type="InterPro" id="IPR042114">
    <property type="entry name" value="GatB_C_1"/>
</dbReference>
<dbReference type="InterPro" id="IPR023168">
    <property type="entry name" value="GatB_Yqey_C_2"/>
</dbReference>
<dbReference type="InterPro" id="IPR017958">
    <property type="entry name" value="Gln-tRNA_amidoTrfase_suB_CS"/>
</dbReference>
<dbReference type="InterPro" id="IPR014746">
    <property type="entry name" value="Gln_synth/guanido_kin_cat_dom"/>
</dbReference>
<dbReference type="NCBIfam" id="TIGR00133">
    <property type="entry name" value="gatB"/>
    <property type="match status" value="1"/>
</dbReference>
<dbReference type="NCBIfam" id="NF004011">
    <property type="entry name" value="PRK05477.1-1"/>
    <property type="match status" value="1"/>
</dbReference>
<dbReference type="NCBIfam" id="NF004012">
    <property type="entry name" value="PRK05477.1-2"/>
    <property type="match status" value="1"/>
</dbReference>
<dbReference type="NCBIfam" id="NF004014">
    <property type="entry name" value="PRK05477.1-4"/>
    <property type="match status" value="1"/>
</dbReference>
<dbReference type="PANTHER" id="PTHR11659">
    <property type="entry name" value="GLUTAMYL-TRNA GLN AMIDOTRANSFERASE SUBUNIT B MITOCHONDRIAL AND PROKARYOTIC PET112-RELATED"/>
    <property type="match status" value="1"/>
</dbReference>
<dbReference type="PANTHER" id="PTHR11659:SF0">
    <property type="entry name" value="GLUTAMYL-TRNA(GLN) AMIDOTRANSFERASE SUBUNIT B, MITOCHONDRIAL"/>
    <property type="match status" value="1"/>
</dbReference>
<dbReference type="Pfam" id="PF02934">
    <property type="entry name" value="GatB_N"/>
    <property type="match status" value="1"/>
</dbReference>
<dbReference type="Pfam" id="PF02637">
    <property type="entry name" value="GatB_Yqey"/>
    <property type="match status" value="1"/>
</dbReference>
<dbReference type="SMART" id="SM00845">
    <property type="entry name" value="GatB_Yqey"/>
    <property type="match status" value="1"/>
</dbReference>
<dbReference type="SUPFAM" id="SSF89095">
    <property type="entry name" value="GatB/YqeY motif"/>
    <property type="match status" value="1"/>
</dbReference>
<dbReference type="SUPFAM" id="SSF55931">
    <property type="entry name" value="Glutamine synthetase/guanido kinase"/>
    <property type="match status" value="1"/>
</dbReference>
<dbReference type="PROSITE" id="PS01234">
    <property type="entry name" value="GATB"/>
    <property type="match status" value="1"/>
</dbReference>
<protein>
    <recommendedName>
        <fullName evidence="1">Aspartyl/glutamyl-tRNA(Asn/Gln) amidotransferase subunit B</fullName>
        <shortName evidence="1">Asp/Glu-ADT subunit B</shortName>
        <ecNumber evidence="1">6.3.5.-</ecNumber>
    </recommendedName>
</protein>
<reference key="1">
    <citation type="journal article" date="2006" name="Proc. Natl. Acad. Sci. U.S.A.">
        <title>The complete genome sequence of Lactobacillus bulgaricus reveals extensive and ongoing reductive evolution.</title>
        <authorList>
            <person name="van de Guchte M."/>
            <person name="Penaud S."/>
            <person name="Grimaldi C."/>
            <person name="Barbe V."/>
            <person name="Bryson K."/>
            <person name="Nicolas P."/>
            <person name="Robert C."/>
            <person name="Oztas S."/>
            <person name="Mangenot S."/>
            <person name="Couloux A."/>
            <person name="Loux V."/>
            <person name="Dervyn R."/>
            <person name="Bossy R."/>
            <person name="Bolotin A."/>
            <person name="Batto J.-M."/>
            <person name="Walunas T."/>
            <person name="Gibrat J.-F."/>
            <person name="Bessieres P."/>
            <person name="Weissenbach J."/>
            <person name="Ehrlich S.D."/>
            <person name="Maguin E."/>
        </authorList>
    </citation>
    <scope>NUCLEOTIDE SEQUENCE [LARGE SCALE GENOMIC DNA]</scope>
    <source>
        <strain>ATCC 11842 / DSM 20081 / BCRC 10696 / JCM 1002 / NBRC 13953 / NCIMB 11778 / NCTC 12712 / WDCM 00102 / Lb 14</strain>
    </source>
</reference>
<organism>
    <name type="scientific">Lactobacillus delbrueckii subsp. bulgaricus (strain ATCC 11842 / DSM 20081 / BCRC 10696 / JCM 1002 / NBRC 13953 / NCIMB 11778 / NCTC 12712 / WDCM 00102 / Lb 14)</name>
    <dbReference type="NCBI Taxonomy" id="390333"/>
    <lineage>
        <taxon>Bacteria</taxon>
        <taxon>Bacillati</taxon>
        <taxon>Bacillota</taxon>
        <taxon>Bacilli</taxon>
        <taxon>Lactobacillales</taxon>
        <taxon>Lactobacillaceae</taxon>
        <taxon>Lactobacillus</taxon>
    </lineage>
</organism>
<accession>Q1GBF3</accession>
<sequence length="476" mass="53580">MNFTSTIGLEVHFELKTKSKIFSPSPVTYGAKPNTETNVIDWGYPGTLPMVNKEVYRLGLMVALATHSHVNPVTHFDRKNYFYPDNPKAYQITQFFKPLAENGYVEVEVHGKKKKIHIHEMHIEEDAGKNTHGTNGFSYVDYNRQGVPLLEVVSEPEMTDPDEAVAYLEKLREIVQFTGASDVKMEEGSMRIDTNISIRPAGQKELGTKVEMKNLNSFEHVRMSLAYEQKRQQEILLSGGRVRLSTRRFDTNTGKTVLERVKEGDADYRYFPEPDLPPYHIKQEWVDEIAANLPKTADERRKIYVDEYGLKPYDANVLLQNKESSDFFDATVAAGADPQQAANWMNTQVNGYLNEKHAELKDIALTPENLAAMIKLISDGTISSKIAKKVFAETVANGTDPKKYVEENGMAQLSDESVLAPMVKEVVDANPQSVEDYKNGKDRAIGFLVGQIMKQTRGKANPKVINKLLLADLASR</sequence>
<evidence type="ECO:0000255" key="1">
    <source>
        <dbReference type="HAMAP-Rule" id="MF_00121"/>
    </source>
</evidence>
<gene>
    <name evidence="1" type="primary">gatB</name>
    <name type="ordered locus">Ldb0470</name>
</gene>
<name>GATB_LACDA</name>
<comment type="function">
    <text evidence="1">Allows the formation of correctly charged Asn-tRNA(Asn) or Gln-tRNA(Gln) through the transamidation of misacylated Asp-tRNA(Asn) or Glu-tRNA(Gln) in organisms which lack either or both of asparaginyl-tRNA or glutaminyl-tRNA synthetases. The reaction takes place in the presence of glutamine and ATP through an activated phospho-Asp-tRNA(Asn) or phospho-Glu-tRNA(Gln).</text>
</comment>
<comment type="catalytic activity">
    <reaction evidence="1">
        <text>L-glutamyl-tRNA(Gln) + L-glutamine + ATP + H2O = L-glutaminyl-tRNA(Gln) + L-glutamate + ADP + phosphate + H(+)</text>
        <dbReference type="Rhea" id="RHEA:17521"/>
        <dbReference type="Rhea" id="RHEA-COMP:9681"/>
        <dbReference type="Rhea" id="RHEA-COMP:9684"/>
        <dbReference type="ChEBI" id="CHEBI:15377"/>
        <dbReference type="ChEBI" id="CHEBI:15378"/>
        <dbReference type="ChEBI" id="CHEBI:29985"/>
        <dbReference type="ChEBI" id="CHEBI:30616"/>
        <dbReference type="ChEBI" id="CHEBI:43474"/>
        <dbReference type="ChEBI" id="CHEBI:58359"/>
        <dbReference type="ChEBI" id="CHEBI:78520"/>
        <dbReference type="ChEBI" id="CHEBI:78521"/>
        <dbReference type="ChEBI" id="CHEBI:456216"/>
    </reaction>
</comment>
<comment type="catalytic activity">
    <reaction evidence="1">
        <text>L-aspartyl-tRNA(Asn) + L-glutamine + ATP + H2O = L-asparaginyl-tRNA(Asn) + L-glutamate + ADP + phosphate + 2 H(+)</text>
        <dbReference type="Rhea" id="RHEA:14513"/>
        <dbReference type="Rhea" id="RHEA-COMP:9674"/>
        <dbReference type="Rhea" id="RHEA-COMP:9677"/>
        <dbReference type="ChEBI" id="CHEBI:15377"/>
        <dbReference type="ChEBI" id="CHEBI:15378"/>
        <dbReference type="ChEBI" id="CHEBI:29985"/>
        <dbReference type="ChEBI" id="CHEBI:30616"/>
        <dbReference type="ChEBI" id="CHEBI:43474"/>
        <dbReference type="ChEBI" id="CHEBI:58359"/>
        <dbReference type="ChEBI" id="CHEBI:78515"/>
        <dbReference type="ChEBI" id="CHEBI:78516"/>
        <dbReference type="ChEBI" id="CHEBI:456216"/>
    </reaction>
</comment>
<comment type="subunit">
    <text evidence="1">Heterotrimer of A, B and C subunits.</text>
</comment>
<comment type="similarity">
    <text evidence="1">Belongs to the GatB/GatE family. GatB subfamily.</text>
</comment>
<keyword id="KW-0067">ATP-binding</keyword>
<keyword id="KW-0436">Ligase</keyword>
<keyword id="KW-0547">Nucleotide-binding</keyword>
<keyword id="KW-0648">Protein biosynthesis</keyword>
<keyword id="KW-1185">Reference proteome</keyword>
<proteinExistence type="inferred from homology"/>